<evidence type="ECO:0000255" key="1">
    <source>
        <dbReference type="HAMAP-Rule" id="MF_00567"/>
    </source>
</evidence>
<organism>
    <name type="scientific">Escherichia coli (strain UTI89 / UPEC)</name>
    <dbReference type="NCBI Taxonomy" id="364106"/>
    <lineage>
        <taxon>Bacteria</taxon>
        <taxon>Pseudomonadati</taxon>
        <taxon>Pseudomonadota</taxon>
        <taxon>Gammaproteobacteria</taxon>
        <taxon>Enterobacterales</taxon>
        <taxon>Enterobacteriaceae</taxon>
        <taxon>Escherichia</taxon>
    </lineage>
</organism>
<sequence length="347" mass="38184">MSVMFDPDTAIYPFPPKPTPLSIDEKAYYREKIKRLLKERNAVMVAHYYTDPEIQQLAEETGGCISDSLEMARFGAKHPASTLLVAGVRFMGETAKILSPEKTILMPTLQAECSLDLGCPVEEFNAFCDAHPDRTVVVYANTSAAVKARADWVVTSSIAVELIDHLDSLGEKIIWAPDKHLGCYVQKQTGADILCWQGACIVHDEFKTQALTRLQEEYPDAAILVHPESPQAIVEMADAVGSTSQLIAAAKTLPHQRLIVATDRGIFYKMQQAVPDKELLEAPTAGEGATCRSCAHCPWMAMNGLQAIAEALELEGSNHEVYVDERLLERALVPLNRMLDFAATLRG</sequence>
<accession>Q1REI1</accession>
<feature type="chain" id="PRO_1000024955" description="Quinolinate synthase">
    <location>
        <begin position="1"/>
        <end position="347"/>
    </location>
</feature>
<feature type="binding site" evidence="1">
    <location>
        <position position="47"/>
    </location>
    <ligand>
        <name>iminosuccinate</name>
        <dbReference type="ChEBI" id="CHEBI:77875"/>
    </ligand>
</feature>
<feature type="binding site" evidence="1">
    <location>
        <position position="68"/>
    </location>
    <ligand>
        <name>iminosuccinate</name>
        <dbReference type="ChEBI" id="CHEBI:77875"/>
    </ligand>
</feature>
<feature type="binding site" evidence="1">
    <location>
        <position position="113"/>
    </location>
    <ligand>
        <name>[4Fe-4S] cluster</name>
        <dbReference type="ChEBI" id="CHEBI:49883"/>
    </ligand>
</feature>
<feature type="binding site" evidence="1">
    <location>
        <begin position="139"/>
        <end position="141"/>
    </location>
    <ligand>
        <name>iminosuccinate</name>
        <dbReference type="ChEBI" id="CHEBI:77875"/>
    </ligand>
</feature>
<feature type="binding site" evidence="1">
    <location>
        <position position="156"/>
    </location>
    <ligand>
        <name>iminosuccinate</name>
        <dbReference type="ChEBI" id="CHEBI:77875"/>
    </ligand>
</feature>
<feature type="binding site" evidence="1">
    <location>
        <position position="200"/>
    </location>
    <ligand>
        <name>[4Fe-4S] cluster</name>
        <dbReference type="ChEBI" id="CHEBI:49883"/>
    </ligand>
</feature>
<feature type="binding site" evidence="1">
    <location>
        <begin position="226"/>
        <end position="228"/>
    </location>
    <ligand>
        <name>iminosuccinate</name>
        <dbReference type="ChEBI" id="CHEBI:77875"/>
    </ligand>
</feature>
<feature type="binding site" evidence="1">
    <location>
        <position position="243"/>
    </location>
    <ligand>
        <name>iminosuccinate</name>
        <dbReference type="ChEBI" id="CHEBI:77875"/>
    </ligand>
</feature>
<feature type="binding site" evidence="1">
    <location>
        <position position="297"/>
    </location>
    <ligand>
        <name>[4Fe-4S] cluster</name>
        <dbReference type="ChEBI" id="CHEBI:49883"/>
    </ligand>
</feature>
<comment type="function">
    <text evidence="1">Catalyzes the condensation of iminoaspartate with dihydroxyacetone phosphate to form quinolinate.</text>
</comment>
<comment type="catalytic activity">
    <reaction evidence="1">
        <text>iminosuccinate + dihydroxyacetone phosphate = quinolinate + phosphate + 2 H2O + H(+)</text>
        <dbReference type="Rhea" id="RHEA:25888"/>
        <dbReference type="ChEBI" id="CHEBI:15377"/>
        <dbReference type="ChEBI" id="CHEBI:15378"/>
        <dbReference type="ChEBI" id="CHEBI:29959"/>
        <dbReference type="ChEBI" id="CHEBI:43474"/>
        <dbReference type="ChEBI" id="CHEBI:57642"/>
        <dbReference type="ChEBI" id="CHEBI:77875"/>
        <dbReference type="EC" id="2.5.1.72"/>
    </reaction>
    <physiologicalReaction direction="left-to-right" evidence="1">
        <dbReference type="Rhea" id="RHEA:25889"/>
    </physiologicalReaction>
</comment>
<comment type="cofactor">
    <cofactor evidence="1">
        <name>[4Fe-4S] cluster</name>
        <dbReference type="ChEBI" id="CHEBI:49883"/>
    </cofactor>
    <text evidence="1">Binds 1 [4Fe-4S] cluster per subunit.</text>
</comment>
<comment type="pathway">
    <text evidence="1">Cofactor biosynthesis; NAD(+) biosynthesis; quinolinate from iminoaspartate: step 1/1.</text>
</comment>
<comment type="subcellular location">
    <subcellularLocation>
        <location evidence="1">Cytoplasm</location>
    </subcellularLocation>
</comment>
<comment type="similarity">
    <text evidence="1">Belongs to the quinolinate synthase family. Type 1 subfamily.</text>
</comment>
<protein>
    <recommendedName>
        <fullName evidence="1">Quinolinate synthase</fullName>
        <ecNumber evidence="1">2.5.1.72</ecNumber>
    </recommendedName>
</protein>
<gene>
    <name evidence="1" type="primary">nadA</name>
    <name type="ordered locus">UTI89_C0747</name>
</gene>
<proteinExistence type="inferred from homology"/>
<reference key="1">
    <citation type="journal article" date="2006" name="Proc. Natl. Acad. Sci. U.S.A.">
        <title>Identification of genes subject to positive selection in uropathogenic strains of Escherichia coli: a comparative genomics approach.</title>
        <authorList>
            <person name="Chen S.L."/>
            <person name="Hung C.-S."/>
            <person name="Xu J."/>
            <person name="Reigstad C.S."/>
            <person name="Magrini V."/>
            <person name="Sabo A."/>
            <person name="Blasiar D."/>
            <person name="Bieri T."/>
            <person name="Meyer R.R."/>
            <person name="Ozersky P."/>
            <person name="Armstrong J.R."/>
            <person name="Fulton R.S."/>
            <person name="Latreille J.P."/>
            <person name="Spieth J."/>
            <person name="Hooton T.M."/>
            <person name="Mardis E.R."/>
            <person name="Hultgren S.J."/>
            <person name="Gordon J.I."/>
        </authorList>
    </citation>
    <scope>NUCLEOTIDE SEQUENCE [LARGE SCALE GENOMIC DNA]</scope>
    <source>
        <strain>UTI89 / UPEC</strain>
    </source>
</reference>
<name>NADA_ECOUT</name>
<dbReference type="EC" id="2.5.1.72" evidence="1"/>
<dbReference type="EMBL" id="CP000243">
    <property type="protein sequence ID" value="ABE06233.1"/>
    <property type="molecule type" value="Genomic_DNA"/>
</dbReference>
<dbReference type="RefSeq" id="WP_000115276.1">
    <property type="nucleotide sequence ID" value="NZ_CP064825.1"/>
</dbReference>
<dbReference type="SMR" id="Q1REI1"/>
<dbReference type="KEGG" id="eci:UTI89_C0747"/>
<dbReference type="HOGENOM" id="CLU_047382_1_0_6"/>
<dbReference type="UniPathway" id="UPA00253">
    <property type="reaction ID" value="UER00327"/>
</dbReference>
<dbReference type="Proteomes" id="UP000001952">
    <property type="component" value="Chromosome"/>
</dbReference>
<dbReference type="GO" id="GO:0005829">
    <property type="term" value="C:cytosol"/>
    <property type="evidence" value="ECO:0007669"/>
    <property type="project" value="TreeGrafter"/>
</dbReference>
<dbReference type="GO" id="GO:0051539">
    <property type="term" value="F:4 iron, 4 sulfur cluster binding"/>
    <property type="evidence" value="ECO:0007669"/>
    <property type="project" value="UniProtKB-KW"/>
</dbReference>
<dbReference type="GO" id="GO:0046872">
    <property type="term" value="F:metal ion binding"/>
    <property type="evidence" value="ECO:0007669"/>
    <property type="project" value="UniProtKB-KW"/>
</dbReference>
<dbReference type="GO" id="GO:0008987">
    <property type="term" value="F:quinolinate synthetase A activity"/>
    <property type="evidence" value="ECO:0007669"/>
    <property type="project" value="UniProtKB-UniRule"/>
</dbReference>
<dbReference type="GO" id="GO:0034628">
    <property type="term" value="P:'de novo' NAD biosynthetic process from L-aspartate"/>
    <property type="evidence" value="ECO:0007669"/>
    <property type="project" value="TreeGrafter"/>
</dbReference>
<dbReference type="FunFam" id="3.40.50.10800:FF:000001">
    <property type="entry name" value="Quinolinate synthase A"/>
    <property type="match status" value="1"/>
</dbReference>
<dbReference type="FunFam" id="3.40.50.10800:FF:000003">
    <property type="entry name" value="Quinolinate synthase A"/>
    <property type="match status" value="1"/>
</dbReference>
<dbReference type="Gene3D" id="3.40.50.10800">
    <property type="entry name" value="NadA-like"/>
    <property type="match status" value="3"/>
</dbReference>
<dbReference type="HAMAP" id="MF_00567">
    <property type="entry name" value="NadA_type1"/>
    <property type="match status" value="1"/>
</dbReference>
<dbReference type="InterPro" id="IPR003473">
    <property type="entry name" value="NadA"/>
</dbReference>
<dbReference type="InterPro" id="IPR036094">
    <property type="entry name" value="NadA_sf"/>
</dbReference>
<dbReference type="InterPro" id="IPR023513">
    <property type="entry name" value="Quinolinate_synth_A_type1"/>
</dbReference>
<dbReference type="NCBIfam" id="TIGR00550">
    <property type="entry name" value="nadA"/>
    <property type="match status" value="1"/>
</dbReference>
<dbReference type="NCBIfam" id="NF006877">
    <property type="entry name" value="PRK09375.1-1"/>
    <property type="match status" value="1"/>
</dbReference>
<dbReference type="NCBIfam" id="NF006878">
    <property type="entry name" value="PRK09375.1-2"/>
    <property type="match status" value="1"/>
</dbReference>
<dbReference type="PANTHER" id="PTHR30573:SF0">
    <property type="entry name" value="QUINOLINATE SYNTHASE, CHLOROPLASTIC"/>
    <property type="match status" value="1"/>
</dbReference>
<dbReference type="PANTHER" id="PTHR30573">
    <property type="entry name" value="QUINOLINATE SYNTHETASE A"/>
    <property type="match status" value="1"/>
</dbReference>
<dbReference type="Pfam" id="PF02445">
    <property type="entry name" value="NadA"/>
    <property type="match status" value="1"/>
</dbReference>
<dbReference type="SUPFAM" id="SSF142754">
    <property type="entry name" value="NadA-like"/>
    <property type="match status" value="1"/>
</dbReference>
<keyword id="KW-0004">4Fe-4S</keyword>
<keyword id="KW-0963">Cytoplasm</keyword>
<keyword id="KW-0408">Iron</keyword>
<keyword id="KW-0411">Iron-sulfur</keyword>
<keyword id="KW-0479">Metal-binding</keyword>
<keyword id="KW-0662">Pyridine nucleotide biosynthesis</keyword>
<keyword id="KW-0808">Transferase</keyword>